<dbReference type="EC" id="6.3.2.4" evidence="2"/>
<dbReference type="EMBL" id="AE000520">
    <property type="protein sequence ID" value="AAC26568.1"/>
    <property type="molecule type" value="Genomic_DNA"/>
</dbReference>
<dbReference type="PIR" id="A71296">
    <property type="entry name" value="A71296"/>
</dbReference>
<dbReference type="RefSeq" id="WP_010882115.1">
    <property type="nucleotide sequence ID" value="NC_021490.2"/>
</dbReference>
<dbReference type="SMR" id="O83676"/>
<dbReference type="IntAct" id="O83676">
    <property type="interactions" value="2"/>
</dbReference>
<dbReference type="STRING" id="243276.TP_0670"/>
<dbReference type="EnsemblBacteria" id="AAC26568">
    <property type="protein sequence ID" value="AAC26568"/>
    <property type="gene ID" value="TP_0670"/>
</dbReference>
<dbReference type="KEGG" id="tpa:TP_0670"/>
<dbReference type="KEGG" id="tpw:TPANIC_0670"/>
<dbReference type="eggNOG" id="COG1181">
    <property type="taxonomic scope" value="Bacteria"/>
</dbReference>
<dbReference type="HOGENOM" id="CLU_039268_0_0_12"/>
<dbReference type="OrthoDB" id="9813261at2"/>
<dbReference type="UniPathway" id="UPA00219"/>
<dbReference type="Proteomes" id="UP000000811">
    <property type="component" value="Chromosome"/>
</dbReference>
<dbReference type="GO" id="GO:0005829">
    <property type="term" value="C:cytosol"/>
    <property type="evidence" value="ECO:0007669"/>
    <property type="project" value="TreeGrafter"/>
</dbReference>
<dbReference type="GO" id="GO:0005524">
    <property type="term" value="F:ATP binding"/>
    <property type="evidence" value="ECO:0007669"/>
    <property type="project" value="UniProtKB-KW"/>
</dbReference>
<dbReference type="GO" id="GO:0008716">
    <property type="term" value="F:D-alanine-D-alanine ligase activity"/>
    <property type="evidence" value="ECO:0007669"/>
    <property type="project" value="UniProtKB-UniRule"/>
</dbReference>
<dbReference type="GO" id="GO:0046872">
    <property type="term" value="F:metal ion binding"/>
    <property type="evidence" value="ECO:0007669"/>
    <property type="project" value="UniProtKB-KW"/>
</dbReference>
<dbReference type="GO" id="GO:0071555">
    <property type="term" value="P:cell wall organization"/>
    <property type="evidence" value="ECO:0007669"/>
    <property type="project" value="UniProtKB-KW"/>
</dbReference>
<dbReference type="GO" id="GO:0009252">
    <property type="term" value="P:peptidoglycan biosynthetic process"/>
    <property type="evidence" value="ECO:0007669"/>
    <property type="project" value="UniProtKB-UniRule"/>
</dbReference>
<dbReference type="GO" id="GO:0008360">
    <property type="term" value="P:regulation of cell shape"/>
    <property type="evidence" value="ECO:0007669"/>
    <property type="project" value="UniProtKB-KW"/>
</dbReference>
<dbReference type="FunFam" id="3.30.1490.20:FF:000007">
    <property type="entry name" value="D-alanine--D-alanine ligase"/>
    <property type="match status" value="1"/>
</dbReference>
<dbReference type="Gene3D" id="3.40.50.20">
    <property type="match status" value="1"/>
</dbReference>
<dbReference type="Gene3D" id="3.30.1490.20">
    <property type="entry name" value="ATP-grasp fold, A domain"/>
    <property type="match status" value="1"/>
</dbReference>
<dbReference type="Gene3D" id="3.30.470.20">
    <property type="entry name" value="ATP-grasp fold, B domain"/>
    <property type="match status" value="1"/>
</dbReference>
<dbReference type="HAMAP" id="MF_00047">
    <property type="entry name" value="Dala_Dala_lig"/>
    <property type="match status" value="1"/>
</dbReference>
<dbReference type="InterPro" id="IPR011761">
    <property type="entry name" value="ATP-grasp"/>
</dbReference>
<dbReference type="InterPro" id="IPR013815">
    <property type="entry name" value="ATP_grasp_subdomain_1"/>
</dbReference>
<dbReference type="InterPro" id="IPR000291">
    <property type="entry name" value="D-Ala_lig_Van_CS"/>
</dbReference>
<dbReference type="InterPro" id="IPR005905">
    <property type="entry name" value="D_ala_D_ala"/>
</dbReference>
<dbReference type="InterPro" id="IPR011095">
    <property type="entry name" value="Dala_Dala_lig_C"/>
</dbReference>
<dbReference type="InterPro" id="IPR011127">
    <property type="entry name" value="Dala_Dala_lig_N"/>
</dbReference>
<dbReference type="InterPro" id="IPR016185">
    <property type="entry name" value="PreATP-grasp_dom_sf"/>
</dbReference>
<dbReference type="NCBIfam" id="TIGR01205">
    <property type="entry name" value="D_ala_D_alaTIGR"/>
    <property type="match status" value="1"/>
</dbReference>
<dbReference type="NCBIfam" id="NF002378">
    <property type="entry name" value="PRK01372.1"/>
    <property type="match status" value="1"/>
</dbReference>
<dbReference type="NCBIfam" id="NF002528">
    <property type="entry name" value="PRK01966.1-4"/>
    <property type="match status" value="1"/>
</dbReference>
<dbReference type="PANTHER" id="PTHR23132">
    <property type="entry name" value="D-ALANINE--D-ALANINE LIGASE"/>
    <property type="match status" value="1"/>
</dbReference>
<dbReference type="PANTHER" id="PTHR23132:SF25">
    <property type="entry name" value="D-ALANINE--D-ALANINE LIGASE A"/>
    <property type="match status" value="1"/>
</dbReference>
<dbReference type="Pfam" id="PF07478">
    <property type="entry name" value="Dala_Dala_lig_C"/>
    <property type="match status" value="1"/>
</dbReference>
<dbReference type="Pfam" id="PF01820">
    <property type="entry name" value="Dala_Dala_lig_N"/>
    <property type="match status" value="1"/>
</dbReference>
<dbReference type="PIRSF" id="PIRSF039102">
    <property type="entry name" value="Ddl/VanB"/>
    <property type="match status" value="1"/>
</dbReference>
<dbReference type="SUPFAM" id="SSF56059">
    <property type="entry name" value="Glutathione synthetase ATP-binding domain-like"/>
    <property type="match status" value="1"/>
</dbReference>
<dbReference type="SUPFAM" id="SSF52440">
    <property type="entry name" value="PreATP-grasp domain"/>
    <property type="match status" value="1"/>
</dbReference>
<dbReference type="PROSITE" id="PS50975">
    <property type="entry name" value="ATP_GRASP"/>
    <property type="match status" value="1"/>
</dbReference>
<dbReference type="PROSITE" id="PS00843">
    <property type="entry name" value="DALA_DALA_LIGASE_1"/>
    <property type="match status" value="1"/>
</dbReference>
<dbReference type="PROSITE" id="PS00844">
    <property type="entry name" value="DALA_DALA_LIGASE_2"/>
    <property type="match status" value="1"/>
</dbReference>
<proteinExistence type="inferred from homology"/>
<gene>
    <name evidence="2" type="primary">ddl</name>
    <name type="synonym">ddlA</name>
    <name type="ordered locus">TP_0670</name>
</gene>
<feature type="chain" id="PRO_0000177898" description="D-alanine--D-alanine ligase">
    <location>
        <begin position="1"/>
        <end position="396"/>
    </location>
</feature>
<feature type="domain" description="ATP-grasp" evidence="2">
    <location>
        <begin position="141"/>
        <end position="347"/>
    </location>
</feature>
<feature type="region of interest" description="Disordered" evidence="3">
    <location>
        <begin position="374"/>
        <end position="396"/>
    </location>
</feature>
<feature type="binding site" evidence="2">
    <location>
        <begin position="174"/>
        <end position="229"/>
    </location>
    <ligand>
        <name>ATP</name>
        <dbReference type="ChEBI" id="CHEBI:30616"/>
    </ligand>
</feature>
<feature type="binding site" evidence="2">
    <location>
        <position position="301"/>
    </location>
    <ligand>
        <name>Mg(2+)</name>
        <dbReference type="ChEBI" id="CHEBI:18420"/>
        <label>1</label>
    </ligand>
</feature>
<feature type="binding site" evidence="2">
    <location>
        <position position="314"/>
    </location>
    <ligand>
        <name>Mg(2+)</name>
        <dbReference type="ChEBI" id="CHEBI:18420"/>
        <label>1</label>
    </ligand>
</feature>
<feature type="binding site" evidence="2">
    <location>
        <position position="314"/>
    </location>
    <ligand>
        <name>Mg(2+)</name>
        <dbReference type="ChEBI" id="CHEBI:18420"/>
        <label>2</label>
    </ligand>
</feature>
<feature type="binding site" evidence="2">
    <location>
        <position position="316"/>
    </location>
    <ligand>
        <name>Mg(2+)</name>
        <dbReference type="ChEBI" id="CHEBI:18420"/>
        <label>2</label>
    </ligand>
</feature>
<comment type="function">
    <text evidence="2">Cell wall formation.</text>
</comment>
<comment type="catalytic activity">
    <reaction evidence="2">
        <text>2 D-alanine + ATP = D-alanyl-D-alanine + ADP + phosphate + H(+)</text>
        <dbReference type="Rhea" id="RHEA:11224"/>
        <dbReference type="ChEBI" id="CHEBI:15378"/>
        <dbReference type="ChEBI" id="CHEBI:30616"/>
        <dbReference type="ChEBI" id="CHEBI:43474"/>
        <dbReference type="ChEBI" id="CHEBI:57416"/>
        <dbReference type="ChEBI" id="CHEBI:57822"/>
        <dbReference type="ChEBI" id="CHEBI:456216"/>
        <dbReference type="EC" id="6.3.2.4"/>
    </reaction>
</comment>
<comment type="cofactor">
    <cofactor evidence="1">
        <name>Mg(2+)</name>
        <dbReference type="ChEBI" id="CHEBI:18420"/>
    </cofactor>
    <cofactor evidence="1">
        <name>Mn(2+)</name>
        <dbReference type="ChEBI" id="CHEBI:29035"/>
    </cofactor>
    <text evidence="1">Binds 2 magnesium or manganese ions per subunit.</text>
</comment>
<comment type="pathway">
    <text evidence="2">Cell wall biogenesis; peptidoglycan biosynthesis.</text>
</comment>
<comment type="subcellular location">
    <subcellularLocation>
        <location evidence="2">Cytoplasm</location>
    </subcellularLocation>
</comment>
<comment type="similarity">
    <text evidence="2">Belongs to the D-alanine--D-alanine ligase family.</text>
</comment>
<sequence>MVHVTLLYGGRSAEHDVSVRSARFVARTLCLQHTVMLIGITRRGVWYAQPACALEQLCTGTVALSIQEDEKRRVCLVPGGGTAGAFVIAGMPCVTDVVFPVLHGSYGEDGTVQGLLEMLQVPYVGCGVCASALAMDKVKAKMLWQAAGLPVLPFVFFRKDAWRMHMQEFVAQLETRLGYPLFVKPAQAGSSVGASAVQTRAPLIPAIEAAFQWDEVVLVERYVRAREIECALSGNGPYTVHGAGEVIAQGAFYDYEEKYADASVARVLVTAPLETAQYEQITTLALRAYEALGLTGLARVDFFLLETGEVYVNEVNTMPGFTSISLFPQICQAAGVAPQDLMAQLLSCARERFAARAALSTDLHAHVCAPSVTAAHDPDAQGDDWDQRDSNPLPTA</sequence>
<protein>
    <recommendedName>
        <fullName evidence="2">D-alanine--D-alanine ligase</fullName>
        <ecNumber evidence="2">6.3.2.4</ecNumber>
    </recommendedName>
    <alternativeName>
        <fullName evidence="2">D-Ala-D-Ala ligase</fullName>
    </alternativeName>
    <alternativeName>
        <fullName evidence="2">D-alanylalanine synthetase</fullName>
    </alternativeName>
</protein>
<name>DDL_TREPA</name>
<evidence type="ECO:0000250" key="1"/>
<evidence type="ECO:0000255" key="2">
    <source>
        <dbReference type="HAMAP-Rule" id="MF_00047"/>
    </source>
</evidence>
<evidence type="ECO:0000256" key="3">
    <source>
        <dbReference type="SAM" id="MobiDB-lite"/>
    </source>
</evidence>
<keyword id="KW-0067">ATP-binding</keyword>
<keyword id="KW-0133">Cell shape</keyword>
<keyword id="KW-0961">Cell wall biogenesis/degradation</keyword>
<keyword id="KW-0963">Cytoplasm</keyword>
<keyword id="KW-0436">Ligase</keyword>
<keyword id="KW-0460">Magnesium</keyword>
<keyword id="KW-0464">Manganese</keyword>
<keyword id="KW-0479">Metal-binding</keyword>
<keyword id="KW-0547">Nucleotide-binding</keyword>
<keyword id="KW-0573">Peptidoglycan synthesis</keyword>
<keyword id="KW-1185">Reference proteome</keyword>
<organism>
    <name type="scientific">Treponema pallidum (strain Nichols)</name>
    <dbReference type="NCBI Taxonomy" id="243276"/>
    <lineage>
        <taxon>Bacteria</taxon>
        <taxon>Pseudomonadati</taxon>
        <taxon>Spirochaetota</taxon>
        <taxon>Spirochaetia</taxon>
        <taxon>Spirochaetales</taxon>
        <taxon>Treponemataceae</taxon>
        <taxon>Treponema</taxon>
    </lineage>
</organism>
<accession>O83676</accession>
<reference key="1">
    <citation type="journal article" date="1998" name="Science">
        <title>Complete genome sequence of Treponema pallidum, the syphilis spirochete.</title>
        <authorList>
            <person name="Fraser C.M."/>
            <person name="Norris S.J."/>
            <person name="Weinstock G.M."/>
            <person name="White O."/>
            <person name="Sutton G.G."/>
            <person name="Dodson R.J."/>
            <person name="Gwinn M.L."/>
            <person name="Hickey E.K."/>
            <person name="Clayton R.A."/>
            <person name="Ketchum K.A."/>
            <person name="Sodergren E."/>
            <person name="Hardham J.M."/>
            <person name="McLeod M.P."/>
            <person name="Salzberg S.L."/>
            <person name="Peterson J.D."/>
            <person name="Khalak H.G."/>
            <person name="Richardson D.L."/>
            <person name="Howell J.K."/>
            <person name="Chidambaram M."/>
            <person name="Utterback T.R."/>
            <person name="McDonald L.A."/>
            <person name="Artiach P."/>
            <person name="Bowman C."/>
            <person name="Cotton M.D."/>
            <person name="Fujii C."/>
            <person name="Garland S.A."/>
            <person name="Hatch B."/>
            <person name="Horst K."/>
            <person name="Roberts K.M."/>
            <person name="Sandusky M."/>
            <person name="Weidman J.F."/>
            <person name="Smith H.O."/>
            <person name="Venter J.C."/>
        </authorList>
    </citation>
    <scope>NUCLEOTIDE SEQUENCE [LARGE SCALE GENOMIC DNA]</scope>
    <source>
        <strain>Nichols</strain>
    </source>
</reference>